<gene>
    <name type="primary">HPCAL1</name>
</gene>
<protein>
    <recommendedName>
        <fullName>Hippocalcin-like protein 1</fullName>
    </recommendedName>
</protein>
<evidence type="ECO:0000250" key="1"/>
<evidence type="ECO:0000250" key="2">
    <source>
        <dbReference type="UniProtKB" id="P37235"/>
    </source>
</evidence>
<evidence type="ECO:0000255" key="3">
    <source>
        <dbReference type="PROSITE-ProRule" id="PRU00448"/>
    </source>
</evidence>
<evidence type="ECO:0000305" key="4"/>
<organism>
    <name type="scientific">Pongo abelii</name>
    <name type="common">Sumatran orangutan</name>
    <name type="synonym">Pongo pygmaeus abelii</name>
    <dbReference type="NCBI Taxonomy" id="9601"/>
    <lineage>
        <taxon>Eukaryota</taxon>
        <taxon>Metazoa</taxon>
        <taxon>Chordata</taxon>
        <taxon>Craniata</taxon>
        <taxon>Vertebrata</taxon>
        <taxon>Euteleostomi</taxon>
        <taxon>Mammalia</taxon>
        <taxon>Eutheria</taxon>
        <taxon>Euarchontoglires</taxon>
        <taxon>Primates</taxon>
        <taxon>Haplorrhini</taxon>
        <taxon>Catarrhini</taxon>
        <taxon>Hominidae</taxon>
        <taxon>Pongo</taxon>
    </lineage>
</organism>
<reference key="1">
    <citation type="submission" date="2004-11" db="EMBL/GenBank/DDBJ databases">
        <authorList>
            <consortium name="The German cDNA consortium"/>
        </authorList>
    </citation>
    <scope>NUCLEOTIDE SEQUENCE [LARGE SCALE MRNA]</scope>
    <source>
        <tissue>Brain cortex</tissue>
    </source>
</reference>
<proteinExistence type="evidence at transcript level"/>
<feature type="initiator methionine" description="Removed" evidence="2">
    <location>
        <position position="1"/>
    </location>
</feature>
<feature type="chain" id="PRO_0000073773" description="Hippocalcin-like protein 1">
    <location>
        <begin position="2"/>
        <end position="193"/>
    </location>
</feature>
<feature type="domain" description="EF-hand 1" evidence="3">
    <location>
        <begin position="41"/>
        <end position="58"/>
    </location>
</feature>
<feature type="domain" description="EF-hand 2" evidence="3">
    <location>
        <begin position="60"/>
        <end position="95"/>
    </location>
</feature>
<feature type="domain" description="EF-hand 3" evidence="3">
    <location>
        <begin position="96"/>
        <end position="131"/>
    </location>
</feature>
<feature type="domain" description="EF-hand 4" evidence="3">
    <location>
        <begin position="144"/>
        <end position="179"/>
    </location>
</feature>
<feature type="binding site" evidence="3">
    <location>
        <position position="73"/>
    </location>
    <ligand>
        <name>Ca(2+)</name>
        <dbReference type="ChEBI" id="CHEBI:29108"/>
        <label>1</label>
    </ligand>
</feature>
<feature type="binding site" evidence="3">
    <location>
        <position position="75"/>
    </location>
    <ligand>
        <name>Ca(2+)</name>
        <dbReference type="ChEBI" id="CHEBI:29108"/>
        <label>1</label>
    </ligand>
</feature>
<feature type="binding site" evidence="3">
    <location>
        <position position="77"/>
    </location>
    <ligand>
        <name>Ca(2+)</name>
        <dbReference type="ChEBI" id="CHEBI:29108"/>
        <label>1</label>
    </ligand>
</feature>
<feature type="binding site" evidence="3">
    <location>
        <position position="79"/>
    </location>
    <ligand>
        <name>Ca(2+)</name>
        <dbReference type="ChEBI" id="CHEBI:29108"/>
        <label>1</label>
    </ligand>
</feature>
<feature type="binding site" evidence="3">
    <location>
        <position position="84"/>
    </location>
    <ligand>
        <name>Ca(2+)</name>
        <dbReference type="ChEBI" id="CHEBI:29108"/>
        <label>1</label>
    </ligand>
</feature>
<feature type="binding site" evidence="3">
    <location>
        <position position="109"/>
    </location>
    <ligand>
        <name>Ca(2+)</name>
        <dbReference type="ChEBI" id="CHEBI:29108"/>
        <label>2</label>
    </ligand>
</feature>
<feature type="binding site" evidence="3">
    <location>
        <position position="111"/>
    </location>
    <ligand>
        <name>Ca(2+)</name>
        <dbReference type="ChEBI" id="CHEBI:29108"/>
        <label>2</label>
    </ligand>
</feature>
<feature type="binding site" evidence="3">
    <location>
        <position position="113"/>
    </location>
    <ligand>
        <name>Ca(2+)</name>
        <dbReference type="ChEBI" id="CHEBI:29108"/>
        <label>2</label>
    </ligand>
</feature>
<feature type="binding site" evidence="3">
    <location>
        <position position="115"/>
    </location>
    <ligand>
        <name>Ca(2+)</name>
        <dbReference type="ChEBI" id="CHEBI:29108"/>
        <label>2</label>
    </ligand>
</feature>
<feature type="binding site" evidence="3">
    <location>
        <position position="120"/>
    </location>
    <ligand>
        <name>Ca(2+)</name>
        <dbReference type="ChEBI" id="CHEBI:29108"/>
        <label>2</label>
    </ligand>
</feature>
<feature type="binding site" evidence="3">
    <location>
        <position position="157"/>
    </location>
    <ligand>
        <name>Ca(2+)</name>
        <dbReference type="ChEBI" id="CHEBI:29108"/>
        <label>3</label>
    </ligand>
</feature>
<feature type="binding site" evidence="3">
    <location>
        <position position="159"/>
    </location>
    <ligand>
        <name>Ca(2+)</name>
        <dbReference type="ChEBI" id="CHEBI:29108"/>
        <label>3</label>
    </ligand>
</feature>
<feature type="binding site" evidence="3">
    <location>
        <position position="161"/>
    </location>
    <ligand>
        <name>Ca(2+)</name>
        <dbReference type="ChEBI" id="CHEBI:29108"/>
        <label>3</label>
    </ligand>
</feature>
<feature type="binding site" evidence="3">
    <location>
        <position position="163"/>
    </location>
    <ligand>
        <name>Ca(2+)</name>
        <dbReference type="ChEBI" id="CHEBI:29108"/>
        <label>3</label>
    </ligand>
</feature>
<feature type="binding site" evidence="3">
    <location>
        <position position="168"/>
    </location>
    <ligand>
        <name>Ca(2+)</name>
        <dbReference type="ChEBI" id="CHEBI:29108"/>
        <label>3</label>
    </ligand>
</feature>
<feature type="lipid moiety-binding region" description="N-myristoyl glycine" evidence="2">
    <location>
        <position position="2"/>
    </location>
</feature>
<comment type="function">
    <text evidence="1">May be involved in the calcium-dependent regulation of rhodopsin phosphorylation.</text>
</comment>
<comment type="subcellular location">
    <subcellularLocation>
        <location evidence="2">Membrane</location>
        <topology evidence="2">Lipid-anchor</topology>
    </subcellularLocation>
</comment>
<comment type="miscellaneous">
    <text evidence="1">Probably binds two or three calcium ions.</text>
</comment>
<comment type="similarity">
    <text evidence="4">Belongs to the recoverin family.</text>
</comment>
<accession>Q5R632</accession>
<keyword id="KW-0106">Calcium</keyword>
<keyword id="KW-0449">Lipoprotein</keyword>
<keyword id="KW-0472">Membrane</keyword>
<keyword id="KW-0479">Metal-binding</keyword>
<keyword id="KW-0519">Myristate</keyword>
<keyword id="KW-1185">Reference proteome</keyword>
<keyword id="KW-0677">Repeat</keyword>
<name>HPCL1_PONAB</name>
<dbReference type="EMBL" id="CR860666">
    <property type="protein sequence ID" value="CAH92784.1"/>
    <property type="molecule type" value="mRNA"/>
</dbReference>
<dbReference type="RefSeq" id="NP_001126625.1">
    <property type="nucleotide sequence ID" value="NM_001133153.1"/>
</dbReference>
<dbReference type="SMR" id="Q5R632"/>
<dbReference type="STRING" id="9601.ENSPPYP00000014129"/>
<dbReference type="GeneID" id="100173622"/>
<dbReference type="KEGG" id="pon:100173622"/>
<dbReference type="CTD" id="3241"/>
<dbReference type="eggNOG" id="KOG0044">
    <property type="taxonomic scope" value="Eukaryota"/>
</dbReference>
<dbReference type="InParanoid" id="Q5R632"/>
<dbReference type="OrthoDB" id="191686at2759"/>
<dbReference type="Proteomes" id="UP000001595">
    <property type="component" value="Unplaced"/>
</dbReference>
<dbReference type="GO" id="GO:0016020">
    <property type="term" value="C:membrane"/>
    <property type="evidence" value="ECO:0007669"/>
    <property type="project" value="UniProtKB-SubCell"/>
</dbReference>
<dbReference type="GO" id="GO:0005509">
    <property type="term" value="F:calcium ion binding"/>
    <property type="evidence" value="ECO:0007669"/>
    <property type="project" value="InterPro"/>
</dbReference>
<dbReference type="CDD" id="cd00051">
    <property type="entry name" value="EFh"/>
    <property type="match status" value="2"/>
</dbReference>
<dbReference type="FunFam" id="1.10.238.10:FF:000078">
    <property type="entry name" value="Hippocalcin-like 1"/>
    <property type="match status" value="1"/>
</dbReference>
<dbReference type="FunFam" id="1.10.238.10:FF:000072">
    <property type="entry name" value="Hippocalcin-like protein 1"/>
    <property type="match status" value="1"/>
</dbReference>
<dbReference type="Gene3D" id="1.10.238.10">
    <property type="entry name" value="EF-hand"/>
    <property type="match status" value="1"/>
</dbReference>
<dbReference type="InterPro" id="IPR011992">
    <property type="entry name" value="EF-hand-dom_pair"/>
</dbReference>
<dbReference type="InterPro" id="IPR018247">
    <property type="entry name" value="EF_Hand_1_Ca_BS"/>
</dbReference>
<dbReference type="InterPro" id="IPR002048">
    <property type="entry name" value="EF_hand_dom"/>
</dbReference>
<dbReference type="InterPro" id="IPR028846">
    <property type="entry name" value="Recoverin"/>
</dbReference>
<dbReference type="PANTHER" id="PTHR23055">
    <property type="entry name" value="CALCIUM BINDING PROTEINS"/>
    <property type="match status" value="1"/>
</dbReference>
<dbReference type="PANTHER" id="PTHR23055:SF79">
    <property type="entry name" value="HIPPOCALCIN-LIKE PROTEIN 1"/>
    <property type="match status" value="1"/>
</dbReference>
<dbReference type="Pfam" id="PF13499">
    <property type="entry name" value="EF-hand_7"/>
    <property type="match status" value="2"/>
</dbReference>
<dbReference type="PRINTS" id="PR00450">
    <property type="entry name" value="RECOVERIN"/>
</dbReference>
<dbReference type="SMART" id="SM00054">
    <property type="entry name" value="EFh"/>
    <property type="match status" value="3"/>
</dbReference>
<dbReference type="SUPFAM" id="SSF47473">
    <property type="entry name" value="EF-hand"/>
    <property type="match status" value="1"/>
</dbReference>
<dbReference type="PROSITE" id="PS00018">
    <property type="entry name" value="EF_HAND_1"/>
    <property type="match status" value="3"/>
</dbReference>
<dbReference type="PROSITE" id="PS50222">
    <property type="entry name" value="EF_HAND_2"/>
    <property type="match status" value="4"/>
</dbReference>
<sequence>MGKQNSKLRPEVLQDLRENTEFTDHELQEWCKGFLKDCPTGHLTVDEFKKIYANFFPYGDASKFAEHVFRTFDTNGDGTIDFREFIIALSVTSRGKLEQKLKWAFSMYDLDGNGYISRSEMLEIVQAIYKMVSSVMKMPEDESTPEKRTDKIFRQMDTNNDGKLSLEEFIKGAKSDPSIVRLLQCDPSSASQF</sequence>